<organism>
    <name type="scientific">Xanthomonas campestris pv. campestris (strain ATCC 33913 / DSM 3586 / NCPPB 528 / LMG 568 / P 25)</name>
    <dbReference type="NCBI Taxonomy" id="190485"/>
    <lineage>
        <taxon>Bacteria</taxon>
        <taxon>Pseudomonadati</taxon>
        <taxon>Pseudomonadota</taxon>
        <taxon>Gammaproteobacteria</taxon>
        <taxon>Lysobacterales</taxon>
        <taxon>Lysobacteraceae</taxon>
        <taxon>Xanthomonas</taxon>
    </lineage>
</organism>
<gene>
    <name evidence="1" type="primary">eno</name>
    <name type="ordered locus">XCC1700</name>
</gene>
<comment type="function">
    <text evidence="1">Catalyzes the reversible conversion of 2-phosphoglycerate (2-PG) into phosphoenolpyruvate (PEP). It is essential for the degradation of carbohydrates via glycolysis.</text>
</comment>
<comment type="catalytic activity">
    <reaction evidence="1">
        <text>(2R)-2-phosphoglycerate = phosphoenolpyruvate + H2O</text>
        <dbReference type="Rhea" id="RHEA:10164"/>
        <dbReference type="ChEBI" id="CHEBI:15377"/>
        <dbReference type="ChEBI" id="CHEBI:58289"/>
        <dbReference type="ChEBI" id="CHEBI:58702"/>
        <dbReference type="EC" id="4.2.1.11"/>
    </reaction>
</comment>
<comment type="cofactor">
    <cofactor evidence="1">
        <name>Mg(2+)</name>
        <dbReference type="ChEBI" id="CHEBI:18420"/>
    </cofactor>
    <text evidence="1">Binds a second Mg(2+) ion via substrate during catalysis.</text>
</comment>
<comment type="pathway">
    <text evidence="1">Carbohydrate degradation; glycolysis; pyruvate from D-glyceraldehyde 3-phosphate: step 4/5.</text>
</comment>
<comment type="subunit">
    <text evidence="1">Component of the RNA degradosome, a multiprotein complex involved in RNA processing and mRNA degradation.</text>
</comment>
<comment type="subcellular location">
    <subcellularLocation>
        <location evidence="1">Cytoplasm</location>
    </subcellularLocation>
    <subcellularLocation>
        <location evidence="1">Secreted</location>
    </subcellularLocation>
    <subcellularLocation>
        <location evidence="1">Cell surface</location>
    </subcellularLocation>
    <text evidence="1">Fractions of enolase are present in both the cytoplasm and on the cell surface.</text>
</comment>
<comment type="similarity">
    <text evidence="1">Belongs to the enolase family.</text>
</comment>
<proteinExistence type="inferred from homology"/>
<evidence type="ECO:0000255" key="1">
    <source>
        <dbReference type="HAMAP-Rule" id="MF_00318"/>
    </source>
</evidence>
<sequence>MTTIAKILAREILDSRGNPTLEAEVTLADGSFGRAAVPSGASTGTKEAVELRDGDKTRYLGKGVRKAVENVNGTIAETLKDFDAADQQGLDRRLIDLDGTENKGRLGANALLGVSLAAAHAVAASRKQPLWQYLSTITESDVALPVPMMNIINGGAHADNNVDFQEFMVLPVGCSSFSEALRAGTEIFHSLKSVLKGHGLSTAVGDEGGFAPDFRSNVEALDTILEAIGKAGYTAGEDILLGLDVASSEFYDNGKYNLVGENKRLTSEQFVDFLADWVAQYPIISIEDGLAEDDWAGWKLLTDRVGKKVQLVGDDLFVTNPKIFKEGIDSGTANAILIKVNQIGTLTETLEAIAMAHAANYASIVSHRSGETEDTTIADIAVATTATQIKTGSLCRSDRVAKYNQLLRIEQALGSGARYAGRDAFVSLKR</sequence>
<reference key="1">
    <citation type="journal article" date="2002" name="Nature">
        <title>Comparison of the genomes of two Xanthomonas pathogens with differing host specificities.</title>
        <authorList>
            <person name="da Silva A.C.R."/>
            <person name="Ferro J.A."/>
            <person name="Reinach F.C."/>
            <person name="Farah C.S."/>
            <person name="Furlan L.R."/>
            <person name="Quaggio R.B."/>
            <person name="Monteiro-Vitorello C.B."/>
            <person name="Van Sluys M.A."/>
            <person name="Almeida N.F. Jr."/>
            <person name="Alves L.M.C."/>
            <person name="do Amaral A.M."/>
            <person name="Bertolini M.C."/>
            <person name="Camargo L.E.A."/>
            <person name="Camarotte G."/>
            <person name="Cannavan F."/>
            <person name="Cardozo J."/>
            <person name="Chambergo F."/>
            <person name="Ciapina L.P."/>
            <person name="Cicarelli R.M.B."/>
            <person name="Coutinho L.L."/>
            <person name="Cursino-Santos J.R."/>
            <person name="El-Dorry H."/>
            <person name="Faria J.B."/>
            <person name="Ferreira A.J.S."/>
            <person name="Ferreira R.C.C."/>
            <person name="Ferro M.I.T."/>
            <person name="Formighieri E.F."/>
            <person name="Franco M.C."/>
            <person name="Greggio C.C."/>
            <person name="Gruber A."/>
            <person name="Katsuyama A.M."/>
            <person name="Kishi L.T."/>
            <person name="Leite R.P."/>
            <person name="Lemos E.G.M."/>
            <person name="Lemos M.V.F."/>
            <person name="Locali E.C."/>
            <person name="Machado M.A."/>
            <person name="Madeira A.M.B.N."/>
            <person name="Martinez-Rossi N.M."/>
            <person name="Martins E.C."/>
            <person name="Meidanis J."/>
            <person name="Menck C.F.M."/>
            <person name="Miyaki C.Y."/>
            <person name="Moon D.H."/>
            <person name="Moreira L.M."/>
            <person name="Novo M.T.M."/>
            <person name="Okura V.K."/>
            <person name="Oliveira M.C."/>
            <person name="Oliveira V.R."/>
            <person name="Pereira H.A."/>
            <person name="Rossi A."/>
            <person name="Sena J.A.D."/>
            <person name="Silva C."/>
            <person name="de Souza R.F."/>
            <person name="Spinola L.A.F."/>
            <person name="Takita M.A."/>
            <person name="Tamura R.E."/>
            <person name="Teixeira E.C."/>
            <person name="Tezza R.I.D."/>
            <person name="Trindade dos Santos M."/>
            <person name="Truffi D."/>
            <person name="Tsai S.M."/>
            <person name="White F.F."/>
            <person name="Setubal J.C."/>
            <person name="Kitajima J.P."/>
        </authorList>
    </citation>
    <scope>NUCLEOTIDE SEQUENCE [LARGE SCALE GENOMIC DNA]</scope>
    <source>
        <strain>ATCC 33913 / DSM 3586 / NCPPB 528 / LMG 568 / P 25</strain>
    </source>
</reference>
<protein>
    <recommendedName>
        <fullName evidence="1">Enolase</fullName>
        <ecNumber evidence="1">4.2.1.11</ecNumber>
    </recommendedName>
    <alternativeName>
        <fullName evidence="1">2-phospho-D-glycerate hydro-lyase</fullName>
    </alternativeName>
    <alternativeName>
        <fullName evidence="1">2-phosphoglycerate dehydratase</fullName>
    </alternativeName>
</protein>
<feature type="chain" id="PRO_0000134012" description="Enolase">
    <location>
        <begin position="1"/>
        <end position="430"/>
    </location>
</feature>
<feature type="active site" description="Proton donor" evidence="1">
    <location>
        <position position="207"/>
    </location>
</feature>
<feature type="active site" description="Proton acceptor" evidence="1">
    <location>
        <position position="339"/>
    </location>
</feature>
<feature type="binding site" evidence="1">
    <location>
        <position position="165"/>
    </location>
    <ligand>
        <name>(2R)-2-phosphoglycerate</name>
        <dbReference type="ChEBI" id="CHEBI:58289"/>
    </ligand>
</feature>
<feature type="binding site" evidence="1">
    <location>
        <position position="244"/>
    </location>
    <ligand>
        <name>Mg(2+)</name>
        <dbReference type="ChEBI" id="CHEBI:18420"/>
    </ligand>
</feature>
<feature type="binding site" evidence="1">
    <location>
        <position position="287"/>
    </location>
    <ligand>
        <name>Mg(2+)</name>
        <dbReference type="ChEBI" id="CHEBI:18420"/>
    </ligand>
</feature>
<feature type="binding site" evidence="1">
    <location>
        <position position="314"/>
    </location>
    <ligand>
        <name>Mg(2+)</name>
        <dbReference type="ChEBI" id="CHEBI:18420"/>
    </ligand>
</feature>
<feature type="binding site" evidence="1">
    <location>
        <position position="339"/>
    </location>
    <ligand>
        <name>(2R)-2-phosphoglycerate</name>
        <dbReference type="ChEBI" id="CHEBI:58289"/>
    </ligand>
</feature>
<feature type="binding site" evidence="1">
    <location>
        <position position="368"/>
    </location>
    <ligand>
        <name>(2R)-2-phosphoglycerate</name>
        <dbReference type="ChEBI" id="CHEBI:58289"/>
    </ligand>
</feature>
<feature type="binding site" evidence="1">
    <location>
        <position position="369"/>
    </location>
    <ligand>
        <name>(2R)-2-phosphoglycerate</name>
        <dbReference type="ChEBI" id="CHEBI:58289"/>
    </ligand>
</feature>
<feature type="binding site" evidence="1">
    <location>
        <position position="390"/>
    </location>
    <ligand>
        <name>(2R)-2-phosphoglycerate</name>
        <dbReference type="ChEBI" id="CHEBI:58289"/>
    </ligand>
</feature>
<name>ENO_XANCP</name>
<dbReference type="EC" id="4.2.1.11" evidence="1"/>
<dbReference type="EMBL" id="AE008922">
    <property type="protein sequence ID" value="AAM40994.1"/>
    <property type="molecule type" value="Genomic_DNA"/>
</dbReference>
<dbReference type="RefSeq" id="NP_637070.1">
    <property type="nucleotide sequence ID" value="NC_003902.1"/>
</dbReference>
<dbReference type="RefSeq" id="WP_011036877.1">
    <property type="nucleotide sequence ID" value="NC_003902.1"/>
</dbReference>
<dbReference type="SMR" id="Q8P9Z3"/>
<dbReference type="STRING" id="190485.XCC1700"/>
<dbReference type="EnsemblBacteria" id="AAM40994">
    <property type="protein sequence ID" value="AAM40994"/>
    <property type="gene ID" value="XCC1700"/>
</dbReference>
<dbReference type="GeneID" id="58013747"/>
<dbReference type="KEGG" id="xcc:XCC1700"/>
<dbReference type="PATRIC" id="fig|190485.4.peg.1812"/>
<dbReference type="eggNOG" id="COG0148">
    <property type="taxonomic scope" value="Bacteria"/>
</dbReference>
<dbReference type="HOGENOM" id="CLU_031223_2_1_6"/>
<dbReference type="OrthoDB" id="9804716at2"/>
<dbReference type="UniPathway" id="UPA00109">
    <property type="reaction ID" value="UER00187"/>
</dbReference>
<dbReference type="Proteomes" id="UP000001010">
    <property type="component" value="Chromosome"/>
</dbReference>
<dbReference type="GO" id="GO:0009986">
    <property type="term" value="C:cell surface"/>
    <property type="evidence" value="ECO:0007669"/>
    <property type="project" value="UniProtKB-SubCell"/>
</dbReference>
<dbReference type="GO" id="GO:0005576">
    <property type="term" value="C:extracellular region"/>
    <property type="evidence" value="ECO:0007669"/>
    <property type="project" value="UniProtKB-SubCell"/>
</dbReference>
<dbReference type="GO" id="GO:0000015">
    <property type="term" value="C:phosphopyruvate hydratase complex"/>
    <property type="evidence" value="ECO:0000318"/>
    <property type="project" value="GO_Central"/>
</dbReference>
<dbReference type="GO" id="GO:0000287">
    <property type="term" value="F:magnesium ion binding"/>
    <property type="evidence" value="ECO:0007669"/>
    <property type="project" value="UniProtKB-UniRule"/>
</dbReference>
<dbReference type="GO" id="GO:0004634">
    <property type="term" value="F:phosphopyruvate hydratase activity"/>
    <property type="evidence" value="ECO:0000318"/>
    <property type="project" value="GO_Central"/>
</dbReference>
<dbReference type="GO" id="GO:0006096">
    <property type="term" value="P:glycolytic process"/>
    <property type="evidence" value="ECO:0000318"/>
    <property type="project" value="GO_Central"/>
</dbReference>
<dbReference type="CDD" id="cd03313">
    <property type="entry name" value="enolase"/>
    <property type="match status" value="1"/>
</dbReference>
<dbReference type="FunFam" id="3.20.20.120:FF:000001">
    <property type="entry name" value="Enolase"/>
    <property type="match status" value="1"/>
</dbReference>
<dbReference type="FunFam" id="3.30.390.10:FF:000001">
    <property type="entry name" value="Enolase"/>
    <property type="match status" value="1"/>
</dbReference>
<dbReference type="Gene3D" id="3.20.20.120">
    <property type="entry name" value="Enolase-like C-terminal domain"/>
    <property type="match status" value="1"/>
</dbReference>
<dbReference type="Gene3D" id="3.30.390.10">
    <property type="entry name" value="Enolase-like, N-terminal domain"/>
    <property type="match status" value="1"/>
</dbReference>
<dbReference type="HAMAP" id="MF_00318">
    <property type="entry name" value="Enolase"/>
    <property type="match status" value="1"/>
</dbReference>
<dbReference type="InterPro" id="IPR000941">
    <property type="entry name" value="Enolase"/>
</dbReference>
<dbReference type="InterPro" id="IPR036849">
    <property type="entry name" value="Enolase-like_C_sf"/>
</dbReference>
<dbReference type="InterPro" id="IPR029017">
    <property type="entry name" value="Enolase-like_N"/>
</dbReference>
<dbReference type="InterPro" id="IPR020810">
    <property type="entry name" value="Enolase_C"/>
</dbReference>
<dbReference type="InterPro" id="IPR020809">
    <property type="entry name" value="Enolase_CS"/>
</dbReference>
<dbReference type="InterPro" id="IPR020811">
    <property type="entry name" value="Enolase_N"/>
</dbReference>
<dbReference type="NCBIfam" id="TIGR01060">
    <property type="entry name" value="eno"/>
    <property type="match status" value="1"/>
</dbReference>
<dbReference type="PANTHER" id="PTHR11902">
    <property type="entry name" value="ENOLASE"/>
    <property type="match status" value="1"/>
</dbReference>
<dbReference type="PANTHER" id="PTHR11902:SF1">
    <property type="entry name" value="ENOLASE"/>
    <property type="match status" value="1"/>
</dbReference>
<dbReference type="Pfam" id="PF00113">
    <property type="entry name" value="Enolase_C"/>
    <property type="match status" value="1"/>
</dbReference>
<dbReference type="Pfam" id="PF03952">
    <property type="entry name" value="Enolase_N"/>
    <property type="match status" value="1"/>
</dbReference>
<dbReference type="PIRSF" id="PIRSF001400">
    <property type="entry name" value="Enolase"/>
    <property type="match status" value="1"/>
</dbReference>
<dbReference type="PRINTS" id="PR00148">
    <property type="entry name" value="ENOLASE"/>
</dbReference>
<dbReference type="SFLD" id="SFLDS00001">
    <property type="entry name" value="Enolase"/>
    <property type="match status" value="1"/>
</dbReference>
<dbReference type="SFLD" id="SFLDF00002">
    <property type="entry name" value="enolase"/>
    <property type="match status" value="1"/>
</dbReference>
<dbReference type="SMART" id="SM01192">
    <property type="entry name" value="Enolase_C"/>
    <property type="match status" value="1"/>
</dbReference>
<dbReference type="SMART" id="SM01193">
    <property type="entry name" value="Enolase_N"/>
    <property type="match status" value="1"/>
</dbReference>
<dbReference type="SUPFAM" id="SSF51604">
    <property type="entry name" value="Enolase C-terminal domain-like"/>
    <property type="match status" value="1"/>
</dbReference>
<dbReference type="SUPFAM" id="SSF54826">
    <property type="entry name" value="Enolase N-terminal domain-like"/>
    <property type="match status" value="1"/>
</dbReference>
<dbReference type="PROSITE" id="PS00164">
    <property type="entry name" value="ENOLASE"/>
    <property type="match status" value="1"/>
</dbReference>
<accession>Q8P9Z3</accession>
<keyword id="KW-0963">Cytoplasm</keyword>
<keyword id="KW-0324">Glycolysis</keyword>
<keyword id="KW-0456">Lyase</keyword>
<keyword id="KW-0460">Magnesium</keyword>
<keyword id="KW-0479">Metal-binding</keyword>
<keyword id="KW-1185">Reference proteome</keyword>
<keyword id="KW-0964">Secreted</keyword>